<sequence>MLNQLQRDILRLKKEKNAIILAHNYQSREIQEIADFKGDSLELCIEASRIEGKDIVVFCGVDFMAETAYILNPDKKILIPDRGAECPMAHMLSAEDVRMARKRYPDAAVVLYVNTLAEAKAEADILCTSANAVRVVESLDEDLVLFGPDRNLAWYVQEHTDKTIIPIPEEGHCYVHKMFTAGDVMAAKEKYPEAELLIHPECDPEVQELADHILSTGGMLRRVLESDAESFIIGTEVDMTTRISLESDKKTIPLLEEAICENMKLHTLEKVKNSLINEEFVVTVPDEIARRARRAVERMIRVSE</sequence>
<dbReference type="EC" id="2.5.1.72" evidence="1"/>
<dbReference type="EMBL" id="AE000666">
    <property type="protein sequence ID" value="AAB86293.1"/>
    <property type="molecule type" value="Genomic_DNA"/>
</dbReference>
<dbReference type="PIR" id="C69111">
    <property type="entry name" value="C69111"/>
</dbReference>
<dbReference type="RefSeq" id="WP_010877429.1">
    <property type="nucleotide sequence ID" value="NC_000916.1"/>
</dbReference>
<dbReference type="SMR" id="O27855"/>
<dbReference type="FunCoup" id="O27855">
    <property type="interactions" value="92"/>
</dbReference>
<dbReference type="STRING" id="187420.MTH_1827"/>
<dbReference type="PaxDb" id="187420-MTH_1827"/>
<dbReference type="EnsemblBacteria" id="AAB86293">
    <property type="protein sequence ID" value="AAB86293"/>
    <property type="gene ID" value="MTH_1827"/>
</dbReference>
<dbReference type="GeneID" id="1470912"/>
<dbReference type="GeneID" id="77402339"/>
<dbReference type="KEGG" id="mth:MTH_1827"/>
<dbReference type="PATRIC" id="fig|187420.15.peg.1781"/>
<dbReference type="HOGENOM" id="CLU_047382_0_0_2"/>
<dbReference type="InParanoid" id="O27855"/>
<dbReference type="UniPathway" id="UPA00253">
    <property type="reaction ID" value="UER00327"/>
</dbReference>
<dbReference type="Proteomes" id="UP000005223">
    <property type="component" value="Chromosome"/>
</dbReference>
<dbReference type="GO" id="GO:0005737">
    <property type="term" value="C:cytoplasm"/>
    <property type="evidence" value="ECO:0007669"/>
    <property type="project" value="UniProtKB-SubCell"/>
</dbReference>
<dbReference type="GO" id="GO:0051539">
    <property type="term" value="F:4 iron, 4 sulfur cluster binding"/>
    <property type="evidence" value="ECO:0007669"/>
    <property type="project" value="UniProtKB-KW"/>
</dbReference>
<dbReference type="GO" id="GO:0046872">
    <property type="term" value="F:metal ion binding"/>
    <property type="evidence" value="ECO:0007669"/>
    <property type="project" value="UniProtKB-KW"/>
</dbReference>
<dbReference type="GO" id="GO:0008987">
    <property type="term" value="F:quinolinate synthetase A activity"/>
    <property type="evidence" value="ECO:0007669"/>
    <property type="project" value="UniProtKB-UniRule"/>
</dbReference>
<dbReference type="GO" id="GO:0034628">
    <property type="term" value="P:'de novo' NAD biosynthetic process from L-aspartate"/>
    <property type="evidence" value="ECO:0007669"/>
    <property type="project" value="TreeGrafter"/>
</dbReference>
<dbReference type="Gene3D" id="3.40.50.10800">
    <property type="entry name" value="NadA-like"/>
    <property type="match status" value="3"/>
</dbReference>
<dbReference type="HAMAP" id="MF_00568">
    <property type="entry name" value="NadA_type2"/>
    <property type="match status" value="1"/>
</dbReference>
<dbReference type="InterPro" id="IPR003473">
    <property type="entry name" value="NadA"/>
</dbReference>
<dbReference type="InterPro" id="IPR036094">
    <property type="entry name" value="NadA_sf"/>
</dbReference>
<dbReference type="InterPro" id="IPR023066">
    <property type="entry name" value="Quinolinate_synth_type2"/>
</dbReference>
<dbReference type="NCBIfam" id="TIGR00550">
    <property type="entry name" value="nadA"/>
    <property type="match status" value="1"/>
</dbReference>
<dbReference type="NCBIfam" id="NF006878">
    <property type="entry name" value="PRK09375.1-2"/>
    <property type="match status" value="1"/>
</dbReference>
<dbReference type="PANTHER" id="PTHR30573:SF0">
    <property type="entry name" value="QUINOLINATE SYNTHASE, CHLOROPLASTIC"/>
    <property type="match status" value="1"/>
</dbReference>
<dbReference type="PANTHER" id="PTHR30573">
    <property type="entry name" value="QUINOLINATE SYNTHETASE A"/>
    <property type="match status" value="1"/>
</dbReference>
<dbReference type="Pfam" id="PF02445">
    <property type="entry name" value="NadA"/>
    <property type="match status" value="1"/>
</dbReference>
<dbReference type="SUPFAM" id="SSF142754">
    <property type="entry name" value="NadA-like"/>
    <property type="match status" value="1"/>
</dbReference>
<evidence type="ECO:0000255" key="1">
    <source>
        <dbReference type="HAMAP-Rule" id="MF_00568"/>
    </source>
</evidence>
<accession>O27855</accession>
<organism>
    <name type="scientific">Methanothermobacter thermautotrophicus (strain ATCC 29096 / DSM 1053 / JCM 10044 / NBRC 100330 / Delta H)</name>
    <name type="common">Methanobacterium thermoautotrophicum</name>
    <dbReference type="NCBI Taxonomy" id="187420"/>
    <lineage>
        <taxon>Archaea</taxon>
        <taxon>Methanobacteriati</taxon>
        <taxon>Methanobacteriota</taxon>
        <taxon>Methanomada group</taxon>
        <taxon>Methanobacteria</taxon>
        <taxon>Methanobacteriales</taxon>
        <taxon>Methanobacteriaceae</taxon>
        <taxon>Methanothermobacter</taxon>
    </lineage>
</organism>
<gene>
    <name evidence="1" type="primary">nadA</name>
    <name type="ordered locus">MTH_1827</name>
</gene>
<feature type="chain" id="PRO_0000155806" description="Quinolinate synthase">
    <location>
        <begin position="1"/>
        <end position="304"/>
    </location>
</feature>
<feature type="binding site" evidence="1">
    <location>
        <position position="23"/>
    </location>
    <ligand>
        <name>iminosuccinate</name>
        <dbReference type="ChEBI" id="CHEBI:77875"/>
    </ligand>
</feature>
<feature type="binding site" evidence="1">
    <location>
        <position position="40"/>
    </location>
    <ligand>
        <name>iminosuccinate</name>
        <dbReference type="ChEBI" id="CHEBI:77875"/>
    </ligand>
</feature>
<feature type="binding site" evidence="1">
    <location>
        <position position="86"/>
    </location>
    <ligand>
        <name>[4Fe-4S] cluster</name>
        <dbReference type="ChEBI" id="CHEBI:49883"/>
    </ligand>
</feature>
<feature type="binding site" evidence="1">
    <location>
        <begin position="112"/>
        <end position="114"/>
    </location>
    <ligand>
        <name>iminosuccinate</name>
        <dbReference type="ChEBI" id="CHEBI:77875"/>
    </ligand>
</feature>
<feature type="binding site" evidence="1">
    <location>
        <position position="129"/>
    </location>
    <ligand>
        <name>iminosuccinate</name>
        <dbReference type="ChEBI" id="CHEBI:77875"/>
    </ligand>
</feature>
<feature type="binding site" evidence="1">
    <location>
        <position position="173"/>
    </location>
    <ligand>
        <name>[4Fe-4S] cluster</name>
        <dbReference type="ChEBI" id="CHEBI:49883"/>
    </ligand>
</feature>
<feature type="binding site" evidence="1">
    <location>
        <begin position="199"/>
        <end position="201"/>
    </location>
    <ligand>
        <name>iminosuccinate</name>
        <dbReference type="ChEBI" id="CHEBI:77875"/>
    </ligand>
</feature>
<feature type="binding site" evidence="1">
    <location>
        <position position="216"/>
    </location>
    <ligand>
        <name>iminosuccinate</name>
        <dbReference type="ChEBI" id="CHEBI:77875"/>
    </ligand>
</feature>
<feature type="binding site" evidence="1">
    <location>
        <position position="260"/>
    </location>
    <ligand>
        <name>[4Fe-4S] cluster</name>
        <dbReference type="ChEBI" id="CHEBI:49883"/>
    </ligand>
</feature>
<proteinExistence type="inferred from homology"/>
<protein>
    <recommendedName>
        <fullName evidence="1">Quinolinate synthase</fullName>
        <ecNumber evidence="1">2.5.1.72</ecNumber>
    </recommendedName>
</protein>
<keyword id="KW-0004">4Fe-4S</keyword>
<keyword id="KW-0963">Cytoplasm</keyword>
<keyword id="KW-0408">Iron</keyword>
<keyword id="KW-0411">Iron-sulfur</keyword>
<keyword id="KW-0479">Metal-binding</keyword>
<keyword id="KW-0662">Pyridine nucleotide biosynthesis</keyword>
<keyword id="KW-1185">Reference proteome</keyword>
<keyword id="KW-0808">Transferase</keyword>
<reference key="1">
    <citation type="journal article" date="1997" name="J. Bacteriol.">
        <title>Complete genome sequence of Methanobacterium thermoautotrophicum deltaH: functional analysis and comparative genomics.</title>
        <authorList>
            <person name="Smith D.R."/>
            <person name="Doucette-Stamm L.A."/>
            <person name="Deloughery C."/>
            <person name="Lee H.-M."/>
            <person name="Dubois J."/>
            <person name="Aldredge T."/>
            <person name="Bashirzadeh R."/>
            <person name="Blakely D."/>
            <person name="Cook R."/>
            <person name="Gilbert K."/>
            <person name="Harrison D."/>
            <person name="Hoang L."/>
            <person name="Keagle P."/>
            <person name="Lumm W."/>
            <person name="Pothier B."/>
            <person name="Qiu D."/>
            <person name="Spadafora R."/>
            <person name="Vicare R."/>
            <person name="Wang Y."/>
            <person name="Wierzbowski J."/>
            <person name="Gibson R."/>
            <person name="Jiwani N."/>
            <person name="Caruso A."/>
            <person name="Bush D."/>
            <person name="Safer H."/>
            <person name="Patwell D."/>
            <person name="Prabhakar S."/>
            <person name="McDougall S."/>
            <person name="Shimer G."/>
            <person name="Goyal A."/>
            <person name="Pietrovski S."/>
            <person name="Church G.M."/>
            <person name="Daniels C.J."/>
            <person name="Mao J.-I."/>
            <person name="Rice P."/>
            <person name="Noelling J."/>
            <person name="Reeve J.N."/>
        </authorList>
    </citation>
    <scope>NUCLEOTIDE SEQUENCE [LARGE SCALE GENOMIC DNA]</scope>
    <source>
        <strain>ATCC 29096 / DSM 1053 / JCM 10044 / NBRC 100330 / Delta H</strain>
    </source>
</reference>
<comment type="function">
    <text evidence="1">Catalyzes the condensation of iminoaspartate with dihydroxyacetone phosphate to form quinolinate.</text>
</comment>
<comment type="catalytic activity">
    <reaction evidence="1">
        <text>iminosuccinate + dihydroxyacetone phosphate = quinolinate + phosphate + 2 H2O + H(+)</text>
        <dbReference type="Rhea" id="RHEA:25888"/>
        <dbReference type="ChEBI" id="CHEBI:15377"/>
        <dbReference type="ChEBI" id="CHEBI:15378"/>
        <dbReference type="ChEBI" id="CHEBI:29959"/>
        <dbReference type="ChEBI" id="CHEBI:43474"/>
        <dbReference type="ChEBI" id="CHEBI:57642"/>
        <dbReference type="ChEBI" id="CHEBI:77875"/>
        <dbReference type="EC" id="2.5.1.72"/>
    </reaction>
    <physiologicalReaction direction="left-to-right" evidence="1">
        <dbReference type="Rhea" id="RHEA:25889"/>
    </physiologicalReaction>
</comment>
<comment type="cofactor">
    <cofactor evidence="1">
        <name>[4Fe-4S] cluster</name>
        <dbReference type="ChEBI" id="CHEBI:49883"/>
    </cofactor>
    <text evidence="1">Binds 1 [4Fe-4S] cluster per subunit.</text>
</comment>
<comment type="pathway">
    <text evidence="1">Cofactor biosynthesis; NAD(+) biosynthesis; quinolinate from iminoaspartate: step 1/1.</text>
</comment>
<comment type="subcellular location">
    <subcellularLocation>
        <location evidence="1">Cytoplasm</location>
    </subcellularLocation>
</comment>
<comment type="similarity">
    <text evidence="1">Belongs to the quinolinate synthase family. Type 2 subfamily.</text>
</comment>
<name>NADA_METTH</name>